<comment type="subcellular location">
    <subcellularLocation>
        <location>Secreted</location>
    </subcellularLocation>
</comment>
<comment type="tissue specificity">
    <text>Plasma.</text>
</comment>
<evidence type="ECO:0000255" key="1"/>
<name>APL1_PETMA</name>
<sequence length="105" mass="11613">MKLHVAALATLAVVCILAAGSEAAPKAMSDPAVVKAQLFPDAFWESFKNVSMEFKKMVHGLQTSNIGEHAKSLYTDTVAVLTPYLQKIRENVTKMYQVYVESKQH</sequence>
<feature type="signal peptide" evidence="1">
    <location>
        <begin position="1"/>
        <end position="21"/>
    </location>
</feature>
<feature type="propeptide" id="PRO_0000020746" evidence="1">
    <location>
        <begin position="22"/>
        <end position="29"/>
    </location>
</feature>
<feature type="chain" id="PRO_0000020747" description="Blood plasma apolipoprotein LAL1">
    <location>
        <begin position="30"/>
        <end position="105"/>
    </location>
</feature>
<dbReference type="EMBL" id="M15891">
    <property type="protein sequence ID" value="AAA49259.1"/>
    <property type="molecule type" value="mRNA"/>
</dbReference>
<dbReference type="PIR" id="A26602">
    <property type="entry name" value="A26602"/>
</dbReference>
<dbReference type="RefSeq" id="XP_032833146.1">
    <property type="nucleotide sequence ID" value="XM_032977255.1"/>
</dbReference>
<dbReference type="SMR" id="P07095"/>
<dbReference type="GeneID" id="103091716"/>
<dbReference type="Proteomes" id="UP001318040">
    <property type="component" value="Chromosome 62"/>
</dbReference>
<dbReference type="GO" id="GO:0034364">
    <property type="term" value="C:high-density lipoprotein particle"/>
    <property type="evidence" value="ECO:0007669"/>
    <property type="project" value="UniProtKB-KW"/>
</dbReference>
<dbReference type="GO" id="GO:0006869">
    <property type="term" value="P:lipid transport"/>
    <property type="evidence" value="ECO:0007669"/>
    <property type="project" value="UniProtKB-KW"/>
</dbReference>
<dbReference type="Gene3D" id="1.20.120.20">
    <property type="entry name" value="Apolipoprotein"/>
    <property type="match status" value="1"/>
</dbReference>
<protein>
    <recommendedName>
        <fullName>Blood plasma apolipoprotein LAL1</fullName>
    </recommendedName>
</protein>
<reference key="1">
    <citation type="journal article" date="1987" name="Biochemistry">
        <title>cDNA sequences of two apolipoproteins from lamprey.</title>
        <authorList>
            <person name="Pontes M."/>
            <person name="Xu X."/>
            <person name="Graham D."/>
            <person name="Riley M."/>
            <person name="Doolittle R.F."/>
        </authorList>
    </citation>
    <scope>NUCLEOTIDE SEQUENCE [MRNA]</scope>
</reference>
<proteinExistence type="evidence at transcript level"/>
<organism>
    <name type="scientific">Petromyzon marinus</name>
    <name type="common">Sea lamprey</name>
    <dbReference type="NCBI Taxonomy" id="7757"/>
    <lineage>
        <taxon>Eukaryota</taxon>
        <taxon>Metazoa</taxon>
        <taxon>Chordata</taxon>
        <taxon>Craniata</taxon>
        <taxon>Vertebrata</taxon>
        <taxon>Cyclostomata</taxon>
        <taxon>Hyperoartia</taxon>
        <taxon>Petromyzontiformes</taxon>
        <taxon>Petromyzontidae</taxon>
        <taxon>Petromyzon</taxon>
    </lineage>
</organism>
<keyword id="KW-0345">HDL</keyword>
<keyword id="KW-0445">Lipid transport</keyword>
<keyword id="KW-0964">Secreted</keyword>
<keyword id="KW-0732">Signal</keyword>
<keyword id="KW-0813">Transport</keyword>
<accession>P07095</accession>